<organism>
    <name type="scientific">Oryza sativa subsp. japonica</name>
    <name type="common">Rice</name>
    <dbReference type="NCBI Taxonomy" id="39947"/>
    <lineage>
        <taxon>Eukaryota</taxon>
        <taxon>Viridiplantae</taxon>
        <taxon>Streptophyta</taxon>
        <taxon>Embryophyta</taxon>
        <taxon>Tracheophyta</taxon>
        <taxon>Spermatophyta</taxon>
        <taxon>Magnoliopsida</taxon>
        <taxon>Liliopsida</taxon>
        <taxon>Poales</taxon>
        <taxon>Poaceae</taxon>
        <taxon>BOP clade</taxon>
        <taxon>Oryzoideae</taxon>
        <taxon>Oryzeae</taxon>
        <taxon>Oryzinae</taxon>
        <taxon>Oryza</taxon>
        <taxon>Oryza sativa</taxon>
    </lineage>
</organism>
<gene>
    <name type="ordered locus">Os05g0134200</name>
    <name type="ordered locus">LOC_Os05g04360</name>
    <name type="ORF">OSJNBa0077L08.15</name>
    <name type="ORF">P0519E07.3</name>
</gene>
<accession>Q6AUQ4</accession>
<accession>A0A0P0WHT1</accession>
<keyword id="KW-0378">Hydrolase</keyword>
<keyword id="KW-0460">Magnesium</keyword>
<keyword id="KW-0464">Manganese</keyword>
<keyword id="KW-0479">Metal-binding</keyword>
<keyword id="KW-0904">Protein phosphatase</keyword>
<keyword id="KW-1185">Reference proteome</keyword>
<protein>
    <recommendedName>
        <fullName>Probable protein phosphatase 2C 47</fullName>
        <shortName>OsPP2C47</shortName>
        <ecNumber>3.1.3.16</ecNumber>
    </recommendedName>
</protein>
<feature type="chain" id="PRO_0000363294" description="Probable protein phosphatase 2C 47">
    <location>
        <begin position="1"/>
        <end position="389"/>
    </location>
</feature>
<feature type="domain" description="PPM-type phosphatase" evidence="2">
    <location>
        <begin position="76"/>
        <end position="346"/>
    </location>
</feature>
<feature type="binding site" evidence="1">
    <location>
        <position position="120"/>
    </location>
    <ligand>
        <name>Mn(2+)</name>
        <dbReference type="ChEBI" id="CHEBI:29035"/>
        <label>1</label>
    </ligand>
</feature>
<feature type="binding site" evidence="1">
    <location>
        <position position="120"/>
    </location>
    <ligand>
        <name>Mn(2+)</name>
        <dbReference type="ChEBI" id="CHEBI:29035"/>
        <label>2</label>
    </ligand>
</feature>
<feature type="binding site" evidence="1">
    <location>
        <position position="121"/>
    </location>
    <ligand>
        <name>Mn(2+)</name>
        <dbReference type="ChEBI" id="CHEBI:29035"/>
        <label>1</label>
    </ligand>
</feature>
<feature type="binding site" evidence="1">
    <location>
        <position position="294"/>
    </location>
    <ligand>
        <name>Mn(2+)</name>
        <dbReference type="ChEBI" id="CHEBI:29035"/>
        <label>2</label>
    </ligand>
</feature>
<feature type="binding site" evidence="1">
    <location>
        <position position="337"/>
    </location>
    <ligand>
        <name>Mn(2+)</name>
        <dbReference type="ChEBI" id="CHEBI:29035"/>
        <label>2</label>
    </ligand>
</feature>
<dbReference type="EC" id="3.1.3.16"/>
<dbReference type="EMBL" id="AC087552">
    <property type="protein sequence ID" value="AAT94045.1"/>
    <property type="molecule type" value="Genomic_DNA"/>
</dbReference>
<dbReference type="EMBL" id="AC118288">
    <property type="protein sequence ID" value="AAT85179.1"/>
    <property type="molecule type" value="Genomic_DNA"/>
</dbReference>
<dbReference type="EMBL" id="AP008211">
    <property type="protein sequence ID" value="BAF16479.1"/>
    <property type="molecule type" value="Genomic_DNA"/>
</dbReference>
<dbReference type="EMBL" id="AP014961">
    <property type="protein sequence ID" value="BAS92136.1"/>
    <property type="molecule type" value="Genomic_DNA"/>
</dbReference>
<dbReference type="EMBL" id="AK067074">
    <property type="protein sequence ID" value="BAG90254.1"/>
    <property type="molecule type" value="mRNA"/>
</dbReference>
<dbReference type="RefSeq" id="XP_015640687.1">
    <property type="nucleotide sequence ID" value="XM_015785201.1"/>
</dbReference>
<dbReference type="SMR" id="Q6AUQ4"/>
<dbReference type="FunCoup" id="Q6AUQ4">
    <property type="interactions" value="4"/>
</dbReference>
<dbReference type="STRING" id="39947.Q6AUQ4"/>
<dbReference type="PaxDb" id="39947-Q6AUQ4"/>
<dbReference type="EnsemblPlants" id="Os05t0134200-01">
    <property type="protein sequence ID" value="Os05t0134200-01"/>
    <property type="gene ID" value="Os05g0134200"/>
</dbReference>
<dbReference type="Gramene" id="Os05t0134200-01">
    <property type="protein sequence ID" value="Os05t0134200-01"/>
    <property type="gene ID" value="Os05g0134200"/>
</dbReference>
<dbReference type="KEGG" id="dosa:Os05g0134200"/>
<dbReference type="eggNOG" id="KOG0698">
    <property type="taxonomic scope" value="Eukaryota"/>
</dbReference>
<dbReference type="HOGENOM" id="CLU_013173_21_0_1"/>
<dbReference type="InParanoid" id="Q6AUQ4"/>
<dbReference type="OMA" id="HAIRFFF"/>
<dbReference type="OrthoDB" id="10264738at2759"/>
<dbReference type="Proteomes" id="UP000000763">
    <property type="component" value="Chromosome 5"/>
</dbReference>
<dbReference type="Proteomes" id="UP000059680">
    <property type="component" value="Chromosome 5"/>
</dbReference>
<dbReference type="GO" id="GO:0046872">
    <property type="term" value="F:metal ion binding"/>
    <property type="evidence" value="ECO:0007669"/>
    <property type="project" value="UniProtKB-KW"/>
</dbReference>
<dbReference type="GO" id="GO:0004722">
    <property type="term" value="F:protein serine/threonine phosphatase activity"/>
    <property type="evidence" value="ECO:0007669"/>
    <property type="project" value="UniProtKB-EC"/>
</dbReference>
<dbReference type="GO" id="GO:0007165">
    <property type="term" value="P:signal transduction"/>
    <property type="evidence" value="ECO:0000318"/>
    <property type="project" value="GO_Central"/>
</dbReference>
<dbReference type="CDD" id="cd00143">
    <property type="entry name" value="PP2Cc"/>
    <property type="match status" value="1"/>
</dbReference>
<dbReference type="FunFam" id="3.60.40.10:FF:000004">
    <property type="entry name" value="Probable protein phosphatase 2C 22"/>
    <property type="match status" value="1"/>
</dbReference>
<dbReference type="Gene3D" id="3.60.40.10">
    <property type="entry name" value="PPM-type phosphatase domain"/>
    <property type="match status" value="1"/>
</dbReference>
<dbReference type="InterPro" id="IPR015655">
    <property type="entry name" value="PP2C"/>
</dbReference>
<dbReference type="InterPro" id="IPR000222">
    <property type="entry name" value="PP2C_BS"/>
</dbReference>
<dbReference type="InterPro" id="IPR036457">
    <property type="entry name" value="PPM-type-like_dom_sf"/>
</dbReference>
<dbReference type="InterPro" id="IPR001932">
    <property type="entry name" value="PPM-type_phosphatase-like_dom"/>
</dbReference>
<dbReference type="PANTHER" id="PTHR13832">
    <property type="entry name" value="PROTEIN PHOSPHATASE 2C"/>
    <property type="match status" value="1"/>
</dbReference>
<dbReference type="PANTHER" id="PTHR13832:SF165">
    <property type="entry name" value="PROTEIN PHOSPHATASE 2C 49-RELATED"/>
    <property type="match status" value="1"/>
</dbReference>
<dbReference type="Pfam" id="PF00481">
    <property type="entry name" value="PP2C"/>
    <property type="match status" value="1"/>
</dbReference>
<dbReference type="SMART" id="SM00331">
    <property type="entry name" value="PP2C_SIG"/>
    <property type="match status" value="1"/>
</dbReference>
<dbReference type="SMART" id="SM00332">
    <property type="entry name" value="PP2Cc"/>
    <property type="match status" value="1"/>
</dbReference>
<dbReference type="SUPFAM" id="SSF81606">
    <property type="entry name" value="PP2C-like"/>
    <property type="match status" value="1"/>
</dbReference>
<dbReference type="PROSITE" id="PS01032">
    <property type="entry name" value="PPM_1"/>
    <property type="match status" value="1"/>
</dbReference>
<dbReference type="PROSITE" id="PS51746">
    <property type="entry name" value="PPM_2"/>
    <property type="match status" value="1"/>
</dbReference>
<comment type="catalytic activity">
    <reaction>
        <text>O-phospho-L-seryl-[protein] + H2O = L-seryl-[protein] + phosphate</text>
        <dbReference type="Rhea" id="RHEA:20629"/>
        <dbReference type="Rhea" id="RHEA-COMP:9863"/>
        <dbReference type="Rhea" id="RHEA-COMP:11604"/>
        <dbReference type="ChEBI" id="CHEBI:15377"/>
        <dbReference type="ChEBI" id="CHEBI:29999"/>
        <dbReference type="ChEBI" id="CHEBI:43474"/>
        <dbReference type="ChEBI" id="CHEBI:83421"/>
        <dbReference type="EC" id="3.1.3.16"/>
    </reaction>
</comment>
<comment type="catalytic activity">
    <reaction>
        <text>O-phospho-L-threonyl-[protein] + H2O = L-threonyl-[protein] + phosphate</text>
        <dbReference type="Rhea" id="RHEA:47004"/>
        <dbReference type="Rhea" id="RHEA-COMP:11060"/>
        <dbReference type="Rhea" id="RHEA-COMP:11605"/>
        <dbReference type="ChEBI" id="CHEBI:15377"/>
        <dbReference type="ChEBI" id="CHEBI:30013"/>
        <dbReference type="ChEBI" id="CHEBI:43474"/>
        <dbReference type="ChEBI" id="CHEBI:61977"/>
        <dbReference type="EC" id="3.1.3.16"/>
    </reaction>
</comment>
<comment type="cofactor">
    <cofactor evidence="1">
        <name>Mg(2+)</name>
        <dbReference type="ChEBI" id="CHEBI:18420"/>
    </cofactor>
    <cofactor evidence="1">
        <name>Mn(2+)</name>
        <dbReference type="ChEBI" id="CHEBI:29035"/>
    </cofactor>
    <text evidence="1">Binds 2 magnesium or manganese ions per subunit.</text>
</comment>
<comment type="similarity">
    <text evidence="3">Belongs to the PP2C family.</text>
</comment>
<sequence length="389" mass="42379">MVAEAEVMHQPVPVLEVPYHRCVAKGVEEVAAAAAVAPPPVVEVEVAVQVPHMGLESAAGAPSISVDALQFVPSIRSGSFADIGPRRYMEDEHIRIDDLSAHLGSLLVCPLPSAFYGVFDGHGGLDAAAYMKRHAMRFLFEDSEFPQASQVDETYVQSVENSVRRAFLQADLALADDLDISRSSGTTALTALVFGRQLLVANAGDCRAVLCRRGVAMEMSRDHRANYAEECERVAASGGYIEDGYLNGVLSVTRALGDWDMKMPDGSISPLIAEPEFRQTMLTEDDEFLIMGCDGIWDVMTSQHAVSIVRRGLRQHDDPERCARELVMEAKRLETADNLTVIVVCFVSELGSPRQEQVGGQAGVARPRSCKSLSAEALCNLRSWLETDR</sequence>
<name>P2C47_ORYSJ</name>
<evidence type="ECO:0000250" key="1"/>
<evidence type="ECO:0000255" key="2">
    <source>
        <dbReference type="PROSITE-ProRule" id="PRU01082"/>
    </source>
</evidence>
<evidence type="ECO:0000305" key="3"/>
<proteinExistence type="evidence at transcript level"/>
<reference key="1">
    <citation type="journal article" date="2005" name="Mol. Genet. Genomics">
        <title>A fine physical map of the rice chromosome 5.</title>
        <authorList>
            <person name="Cheng C.-H."/>
            <person name="Chung M.C."/>
            <person name="Liu S.-M."/>
            <person name="Chen S.-K."/>
            <person name="Kao F.Y."/>
            <person name="Lin S.-J."/>
            <person name="Hsiao S.-H."/>
            <person name="Tseng I.C."/>
            <person name="Hsing Y.-I.C."/>
            <person name="Wu H.-P."/>
            <person name="Chen C.-S."/>
            <person name="Shaw J.-F."/>
            <person name="Wu J."/>
            <person name="Matsumoto T."/>
            <person name="Sasaki T."/>
            <person name="Chen H.-C."/>
            <person name="Chow T.-Y."/>
        </authorList>
    </citation>
    <scope>NUCLEOTIDE SEQUENCE [LARGE SCALE GENOMIC DNA]</scope>
    <source>
        <strain>cv. Nipponbare</strain>
    </source>
</reference>
<reference key="2">
    <citation type="journal article" date="2005" name="Nature">
        <title>The map-based sequence of the rice genome.</title>
        <authorList>
            <consortium name="International rice genome sequencing project (IRGSP)"/>
        </authorList>
    </citation>
    <scope>NUCLEOTIDE SEQUENCE [LARGE SCALE GENOMIC DNA]</scope>
    <source>
        <strain>cv. Nipponbare</strain>
    </source>
</reference>
<reference key="3">
    <citation type="journal article" date="2008" name="Nucleic Acids Res.">
        <title>The rice annotation project database (RAP-DB): 2008 update.</title>
        <authorList>
            <consortium name="The rice annotation project (RAP)"/>
        </authorList>
    </citation>
    <scope>GENOME REANNOTATION</scope>
    <source>
        <strain>cv. Nipponbare</strain>
    </source>
</reference>
<reference key="4">
    <citation type="journal article" date="2013" name="Rice">
        <title>Improvement of the Oryza sativa Nipponbare reference genome using next generation sequence and optical map data.</title>
        <authorList>
            <person name="Kawahara Y."/>
            <person name="de la Bastide M."/>
            <person name="Hamilton J.P."/>
            <person name="Kanamori H."/>
            <person name="McCombie W.R."/>
            <person name="Ouyang S."/>
            <person name="Schwartz D.C."/>
            <person name="Tanaka T."/>
            <person name="Wu J."/>
            <person name="Zhou S."/>
            <person name="Childs K.L."/>
            <person name="Davidson R.M."/>
            <person name="Lin H."/>
            <person name="Quesada-Ocampo L."/>
            <person name="Vaillancourt B."/>
            <person name="Sakai H."/>
            <person name="Lee S.S."/>
            <person name="Kim J."/>
            <person name="Numa H."/>
            <person name="Itoh T."/>
            <person name="Buell C.R."/>
            <person name="Matsumoto T."/>
        </authorList>
    </citation>
    <scope>GENOME REANNOTATION</scope>
    <source>
        <strain>cv. Nipponbare</strain>
    </source>
</reference>
<reference key="5">
    <citation type="journal article" date="2003" name="Science">
        <title>Collection, mapping, and annotation of over 28,000 cDNA clones from japonica rice.</title>
        <authorList>
            <consortium name="The rice full-length cDNA consortium"/>
        </authorList>
    </citation>
    <scope>NUCLEOTIDE SEQUENCE [LARGE SCALE MRNA]</scope>
    <source>
        <strain>cv. Nipponbare</strain>
    </source>
</reference>
<reference key="6">
    <citation type="journal article" date="2008" name="BMC Genomics">
        <title>Genome-wide and expression analysis of protein phosphatase 2C in rice and Arabidopsis.</title>
        <authorList>
            <person name="Xue T."/>
            <person name="Wang D."/>
            <person name="Zhang S."/>
            <person name="Ehlting J."/>
            <person name="Ni F."/>
            <person name="Jacab S."/>
            <person name="Zheng C."/>
            <person name="Zhong Y."/>
        </authorList>
    </citation>
    <scope>GENE FAMILY</scope>
    <scope>NOMENCLATURE</scope>
</reference>